<sequence length="248" mass="28029">MATTLSRDQYVYMAKLAEQAERYEEMVQFMEQLVSGATPAGELTVEERNLLSVAYKNVIGSLRAAWRIVSSIEQKEESRKNEEHVSLVKDYRSKVETELSSICSGILRLLDSHLIPSATASESKVFYLKMKGDYHRYLAEFKSGDERKTAAEDTMIAYKAAQDVAVADLAPTHPIRLGLALNFSVFYYEILNSSEKACSMAKQAFEEAIAELDTLGEESYKDSTLIMQLLRDNLTLWTSDMQEQMDEA</sequence>
<feature type="chain" id="PRO_0000058670" description="14-3-3-like protein G-BOX factor 14 kappa">
    <location>
        <begin position="1"/>
        <end position="248"/>
    </location>
</feature>
<feature type="modified residue" description="Phosphoserine" evidence="1">
    <location>
        <position position="70"/>
    </location>
</feature>
<feature type="modified residue" description="Phosphoserine" evidence="1">
    <location>
        <position position="112"/>
    </location>
</feature>
<feature type="modified residue" description="Phosphoserine" evidence="1">
    <location>
        <position position="193"/>
    </location>
</feature>
<feature type="modified residue" description="Phosphothreonine" evidence="1">
    <location>
        <position position="214"/>
    </location>
</feature>
<feature type="splice variant" id="VSP_008971" description="In isoform 2." evidence="8">
    <location>
        <begin position="243"/>
        <end position="244"/>
    </location>
</feature>
<evidence type="ECO:0000250" key="1">
    <source>
        <dbReference type="UniProtKB" id="P48349"/>
    </source>
</evidence>
<evidence type="ECO:0000269" key="2">
    <source>
    </source>
</evidence>
<evidence type="ECO:0000269" key="3">
    <source>
    </source>
</evidence>
<evidence type="ECO:0000269" key="4">
    <source>
    </source>
</evidence>
<evidence type="ECO:0000269" key="5">
    <source>
    </source>
</evidence>
<evidence type="ECO:0000303" key="6">
    <source>
    </source>
</evidence>
<evidence type="ECO:0000303" key="7">
    <source ref="3"/>
</evidence>
<evidence type="ECO:0000303" key="8">
    <source ref="7"/>
</evidence>
<evidence type="ECO:0000305" key="9"/>
<evidence type="ECO:0000312" key="10">
    <source>
        <dbReference type="Araport" id="AT5G65430"/>
    </source>
</evidence>
<evidence type="ECO:0000312" key="11">
    <source>
        <dbReference type="EMBL" id="BAB11565.1"/>
    </source>
</evidence>
<organism>
    <name type="scientific">Arabidopsis thaliana</name>
    <name type="common">Mouse-ear cress</name>
    <dbReference type="NCBI Taxonomy" id="3702"/>
    <lineage>
        <taxon>Eukaryota</taxon>
        <taxon>Viridiplantae</taxon>
        <taxon>Streptophyta</taxon>
        <taxon>Embryophyta</taxon>
        <taxon>Tracheophyta</taxon>
        <taxon>Spermatophyta</taxon>
        <taxon>Magnoliopsida</taxon>
        <taxon>eudicotyledons</taxon>
        <taxon>Gunneridae</taxon>
        <taxon>Pentapetalae</taxon>
        <taxon>rosids</taxon>
        <taxon>malvids</taxon>
        <taxon>Brassicales</taxon>
        <taxon>Brassicaceae</taxon>
        <taxon>Camelineae</taxon>
        <taxon>Arabidopsis</taxon>
    </lineage>
</organism>
<name>14338_ARATH</name>
<proteinExistence type="evidence at protein level"/>
<dbReference type="EMBL" id="U36447">
    <property type="protein sequence ID" value="AAA79700.2"/>
    <property type="molecule type" value="mRNA"/>
</dbReference>
<dbReference type="EMBL" id="AF145300">
    <property type="protein sequence ID" value="AAD51783.1"/>
    <property type="molecule type" value="Genomic_DNA"/>
</dbReference>
<dbReference type="EMBL" id="AB011479">
    <property type="protein sequence ID" value="BAB11565.1"/>
    <property type="molecule type" value="Genomic_DNA"/>
</dbReference>
<dbReference type="EMBL" id="CP002688">
    <property type="protein sequence ID" value="AED98052.1"/>
    <property type="molecule type" value="Genomic_DNA"/>
</dbReference>
<dbReference type="EMBL" id="CP002688">
    <property type="protein sequence ID" value="AED98053.1"/>
    <property type="molecule type" value="Genomic_DNA"/>
</dbReference>
<dbReference type="EMBL" id="AY050996">
    <property type="protein sequence ID" value="AAK93673.1"/>
    <property type="molecule type" value="mRNA"/>
</dbReference>
<dbReference type="EMBL" id="AY079350">
    <property type="protein sequence ID" value="AAL85081.1"/>
    <property type="molecule type" value="mRNA"/>
</dbReference>
<dbReference type="EMBL" id="AK228019">
    <property type="protein sequence ID" value="BAE99981.1"/>
    <property type="molecule type" value="mRNA"/>
</dbReference>
<dbReference type="EMBL" id="AY085088">
    <property type="protein sequence ID" value="AAM61642.1"/>
    <property type="molecule type" value="mRNA"/>
</dbReference>
<dbReference type="RefSeq" id="NP_569012.2">
    <molecule id="P48348-2"/>
    <property type="nucleotide sequence ID" value="NM_125941.2"/>
</dbReference>
<dbReference type="RefSeq" id="NP_851274.1">
    <molecule id="P48348-1"/>
    <property type="nucleotide sequence ID" value="NM_180943.2"/>
</dbReference>
<dbReference type="SMR" id="P48348"/>
<dbReference type="BioGRID" id="21910">
    <property type="interactions" value="196"/>
</dbReference>
<dbReference type="FunCoup" id="P48348">
    <property type="interactions" value="3210"/>
</dbReference>
<dbReference type="IntAct" id="P48348">
    <property type="interactions" value="4"/>
</dbReference>
<dbReference type="MINT" id="P48348"/>
<dbReference type="STRING" id="3702.P48348"/>
<dbReference type="GlyGen" id="P48348">
    <property type="glycosylation" value="1 site"/>
</dbReference>
<dbReference type="iPTMnet" id="P48348"/>
<dbReference type="MetOSite" id="P48348"/>
<dbReference type="PaxDb" id="3702-AT5G65430.3"/>
<dbReference type="ProteomicsDB" id="244525">
    <molecule id="P48348-1"/>
</dbReference>
<dbReference type="EnsemblPlants" id="AT5G65430.1">
    <molecule id="P48348-1"/>
    <property type="protein sequence ID" value="AT5G65430.1"/>
    <property type="gene ID" value="AT5G65430"/>
</dbReference>
<dbReference type="EnsemblPlants" id="AT5G65430.2">
    <molecule id="P48348-2"/>
    <property type="protein sequence ID" value="AT5G65430.2"/>
    <property type="gene ID" value="AT5G65430"/>
</dbReference>
<dbReference type="GeneID" id="836668"/>
<dbReference type="Gramene" id="AT5G65430.1">
    <molecule id="P48348-1"/>
    <property type="protein sequence ID" value="AT5G65430.1"/>
    <property type="gene ID" value="AT5G65430"/>
</dbReference>
<dbReference type="Gramene" id="AT5G65430.2">
    <molecule id="P48348-2"/>
    <property type="protein sequence ID" value="AT5G65430.2"/>
    <property type="gene ID" value="AT5G65430"/>
</dbReference>
<dbReference type="KEGG" id="ath:AT5G65430"/>
<dbReference type="Araport" id="AT5G65430"/>
<dbReference type="TAIR" id="AT5G65430">
    <property type="gene designation" value="GRF8"/>
</dbReference>
<dbReference type="eggNOG" id="KOG0841">
    <property type="taxonomic scope" value="Eukaryota"/>
</dbReference>
<dbReference type="InParanoid" id="P48348"/>
<dbReference type="OMA" id="YDEMVNE"/>
<dbReference type="OrthoDB" id="10260625at2759"/>
<dbReference type="PhylomeDB" id="P48348"/>
<dbReference type="PRO" id="PR:P48348"/>
<dbReference type="Proteomes" id="UP000006548">
    <property type="component" value="Chromosome 5"/>
</dbReference>
<dbReference type="ExpressionAtlas" id="P48348">
    <property type="expression patterns" value="baseline and differential"/>
</dbReference>
<dbReference type="GO" id="GO:0005737">
    <property type="term" value="C:cytoplasm"/>
    <property type="evidence" value="ECO:0007669"/>
    <property type="project" value="UniProtKB-SubCell"/>
</dbReference>
<dbReference type="GO" id="GO:0005634">
    <property type="term" value="C:nucleus"/>
    <property type="evidence" value="ECO:0007669"/>
    <property type="project" value="UniProtKB-SubCell"/>
</dbReference>
<dbReference type="GO" id="GO:0019222">
    <property type="term" value="P:regulation of metabolic process"/>
    <property type="evidence" value="ECO:0000315"/>
    <property type="project" value="UniProtKB"/>
</dbReference>
<dbReference type="GO" id="GO:0050826">
    <property type="term" value="P:response to freezing"/>
    <property type="evidence" value="ECO:0000315"/>
    <property type="project" value="UniProtKB"/>
</dbReference>
<dbReference type="FunFam" id="1.20.190.20:FF:000002">
    <property type="entry name" value="14-3-3 protein epsilon"/>
    <property type="match status" value="1"/>
</dbReference>
<dbReference type="Gene3D" id="1.20.190.20">
    <property type="entry name" value="14-3-3 domain"/>
    <property type="match status" value="1"/>
</dbReference>
<dbReference type="InterPro" id="IPR000308">
    <property type="entry name" value="14-3-3"/>
</dbReference>
<dbReference type="InterPro" id="IPR023409">
    <property type="entry name" value="14-3-3_CS"/>
</dbReference>
<dbReference type="InterPro" id="IPR036815">
    <property type="entry name" value="14-3-3_dom_sf"/>
</dbReference>
<dbReference type="InterPro" id="IPR023410">
    <property type="entry name" value="14-3-3_domain"/>
</dbReference>
<dbReference type="PANTHER" id="PTHR18860">
    <property type="entry name" value="14-3-3 PROTEIN"/>
    <property type="match status" value="1"/>
</dbReference>
<dbReference type="Pfam" id="PF00244">
    <property type="entry name" value="14-3-3"/>
    <property type="match status" value="1"/>
</dbReference>
<dbReference type="PIRSF" id="PIRSF000868">
    <property type="entry name" value="14-3-3"/>
    <property type="match status" value="1"/>
</dbReference>
<dbReference type="PRINTS" id="PR00305">
    <property type="entry name" value="1433ZETA"/>
</dbReference>
<dbReference type="SMART" id="SM00101">
    <property type="entry name" value="14_3_3"/>
    <property type="match status" value="1"/>
</dbReference>
<dbReference type="SUPFAM" id="SSF48445">
    <property type="entry name" value="14-3-3 protein"/>
    <property type="match status" value="1"/>
</dbReference>
<dbReference type="PROSITE" id="PS00796">
    <property type="entry name" value="1433_1"/>
    <property type="match status" value="1"/>
</dbReference>
<dbReference type="PROSITE" id="PS00797">
    <property type="entry name" value="1433_2"/>
    <property type="match status" value="1"/>
</dbReference>
<reference key="1">
    <citation type="journal article" date="1997" name="Plant Physiol.">
        <title>The Arabidopsis 14-3-3 multigene family.</title>
        <authorList>
            <person name="Wu K."/>
            <person name="Rooney M.F."/>
            <person name="Ferl R.J."/>
        </authorList>
    </citation>
    <scope>NUCLEOTIDE SEQUENCE [MRNA] (ISOFORM 1)</scope>
    <source>
        <strain>cv. Columbia</strain>
    </source>
</reference>
<reference key="2">
    <citation type="submission" date="2001-12" db="EMBL/GenBank/DDBJ databases">
        <authorList>
            <person name="Reyes M."/>
            <person name="Ferl R.J."/>
        </authorList>
    </citation>
    <scope>SEQUENCE REVISION TO 53; 72; 121 AND 154</scope>
</reference>
<reference key="3">
    <citation type="online journal article" date="1999" name="Plant Gene Register">
        <title>Sequences of five Arabidopsis general regulatory factor (GRF) genes encoding 14-3-3 proteins.</title>
        <authorList>
            <person name="Chung H.-J."/>
            <person name="Shanker S."/>
            <person name="Ferl R.J."/>
        </authorList>
        <locator>PGR99-114</locator>
    </citation>
    <scope>NUCLEOTIDE SEQUENCE [GENOMIC DNA]</scope>
    <source>
        <strain>cv. Columbia</strain>
    </source>
</reference>
<reference key="4">
    <citation type="journal article" date="1998" name="DNA Res.">
        <title>Structural analysis of Arabidopsis thaliana chromosome 5. V. Sequence features of the regions of 1,381,565 bp covered by twenty one physically assigned P1 and TAC clones.</title>
        <authorList>
            <person name="Kaneko T."/>
            <person name="Kotani H."/>
            <person name="Nakamura Y."/>
            <person name="Sato S."/>
            <person name="Asamizu E."/>
            <person name="Miyajima N."/>
            <person name="Tabata S."/>
        </authorList>
    </citation>
    <scope>NUCLEOTIDE SEQUENCE [LARGE SCALE GENOMIC DNA]</scope>
    <source>
        <strain>cv. Columbia</strain>
    </source>
</reference>
<reference key="5">
    <citation type="journal article" date="2017" name="Plant J.">
        <title>Araport11: a complete reannotation of the Arabidopsis thaliana reference genome.</title>
        <authorList>
            <person name="Cheng C.Y."/>
            <person name="Krishnakumar V."/>
            <person name="Chan A.P."/>
            <person name="Thibaud-Nissen F."/>
            <person name="Schobel S."/>
            <person name="Town C.D."/>
        </authorList>
    </citation>
    <scope>GENOME REANNOTATION</scope>
    <source>
        <strain>cv. Columbia</strain>
    </source>
</reference>
<reference key="6">
    <citation type="journal article" date="2003" name="Science">
        <title>Empirical analysis of transcriptional activity in the Arabidopsis genome.</title>
        <authorList>
            <person name="Yamada K."/>
            <person name="Lim J."/>
            <person name="Dale J.M."/>
            <person name="Chen H."/>
            <person name="Shinn P."/>
            <person name="Palm C.J."/>
            <person name="Southwick A.M."/>
            <person name="Wu H.C."/>
            <person name="Kim C.J."/>
            <person name="Nguyen M."/>
            <person name="Pham P.K."/>
            <person name="Cheuk R.F."/>
            <person name="Karlin-Newmann G."/>
            <person name="Liu S.X."/>
            <person name="Lam B."/>
            <person name="Sakano H."/>
            <person name="Wu T."/>
            <person name="Yu G."/>
            <person name="Miranda M."/>
            <person name="Quach H.L."/>
            <person name="Tripp M."/>
            <person name="Chang C.H."/>
            <person name="Lee J.M."/>
            <person name="Toriumi M.J."/>
            <person name="Chan M.M."/>
            <person name="Tang C.C."/>
            <person name="Onodera C.S."/>
            <person name="Deng J.M."/>
            <person name="Akiyama K."/>
            <person name="Ansari Y."/>
            <person name="Arakawa T."/>
            <person name="Banh J."/>
            <person name="Banno F."/>
            <person name="Bowser L."/>
            <person name="Brooks S.Y."/>
            <person name="Carninci P."/>
            <person name="Chao Q."/>
            <person name="Choy N."/>
            <person name="Enju A."/>
            <person name="Goldsmith A.D."/>
            <person name="Gurjal M."/>
            <person name="Hansen N.F."/>
            <person name="Hayashizaki Y."/>
            <person name="Johnson-Hopson C."/>
            <person name="Hsuan V.W."/>
            <person name="Iida K."/>
            <person name="Karnes M."/>
            <person name="Khan S."/>
            <person name="Koesema E."/>
            <person name="Ishida J."/>
            <person name="Jiang P.X."/>
            <person name="Jones T."/>
            <person name="Kawai J."/>
            <person name="Kamiya A."/>
            <person name="Meyers C."/>
            <person name="Nakajima M."/>
            <person name="Narusaka M."/>
            <person name="Seki M."/>
            <person name="Sakurai T."/>
            <person name="Satou M."/>
            <person name="Tamse R."/>
            <person name="Vaysberg M."/>
            <person name="Wallender E.K."/>
            <person name="Wong C."/>
            <person name="Yamamura Y."/>
            <person name="Yuan S."/>
            <person name="Shinozaki K."/>
            <person name="Davis R.W."/>
            <person name="Theologis A."/>
            <person name="Ecker J.R."/>
        </authorList>
    </citation>
    <scope>NUCLEOTIDE SEQUENCE [LARGE SCALE MRNA] (ISOFORM 1)</scope>
    <source>
        <strain>cv. Columbia</strain>
    </source>
</reference>
<reference key="7">
    <citation type="submission" date="2006-07" db="EMBL/GenBank/DDBJ databases">
        <title>Large-scale analysis of RIKEN Arabidopsis full-length (RAFL) cDNAs.</title>
        <authorList>
            <person name="Totoki Y."/>
            <person name="Seki M."/>
            <person name="Ishida J."/>
            <person name="Nakajima M."/>
            <person name="Enju A."/>
            <person name="Kamiya A."/>
            <person name="Narusaka M."/>
            <person name="Shin-i T."/>
            <person name="Nakagawa M."/>
            <person name="Sakamoto N."/>
            <person name="Oishi K."/>
            <person name="Kohara Y."/>
            <person name="Kobayashi M."/>
            <person name="Toyoda A."/>
            <person name="Sakaki Y."/>
            <person name="Sakurai T."/>
            <person name="Iida K."/>
            <person name="Akiyama K."/>
            <person name="Satou M."/>
            <person name="Toyoda T."/>
            <person name="Konagaya A."/>
            <person name="Carninci P."/>
            <person name="Kawai J."/>
            <person name="Hayashizaki Y."/>
            <person name="Shinozaki K."/>
        </authorList>
    </citation>
    <scope>NUCLEOTIDE SEQUENCE [LARGE SCALE MRNA] (ISOFORM 2)</scope>
    <source>
        <strain>cv. Columbia</strain>
    </source>
</reference>
<reference key="8">
    <citation type="submission" date="2002-03" db="EMBL/GenBank/DDBJ databases">
        <title>Full-length cDNA from Arabidopsis thaliana.</title>
        <authorList>
            <person name="Brover V.V."/>
            <person name="Troukhan M.E."/>
            <person name="Alexandrov N.A."/>
            <person name="Lu Y.-P."/>
            <person name="Flavell R.B."/>
            <person name="Feldmann K.A."/>
        </authorList>
    </citation>
    <scope>NUCLEOTIDE SEQUENCE [LARGE SCALE MRNA] (ISOFORM 1)</scope>
</reference>
<reference key="9">
    <citation type="journal article" date="2011" name="BMC Syst. Biol.">
        <title>Determining novel functions of Arabidopsis 14-3-3 proteins in central metabolic processes.</title>
        <authorList>
            <person name="Diaz C."/>
            <person name="Kusano M."/>
            <person name="Sulpice R."/>
            <person name="Araki M."/>
            <person name="Redestig H."/>
            <person name="Saito K."/>
            <person name="Stitt M."/>
            <person name="Shin R."/>
        </authorList>
    </citation>
    <scope>FUNCTION</scope>
    <scope>DISRUPTION PHENOTYPE</scope>
    <scope>INTERACTION WITH IDH3; MDH1 AND MDH2</scope>
</reference>
<reference key="10">
    <citation type="journal article" date="2014" name="Plant J.">
        <title>Light modulated activity of root alkaline/neutral invertase involves the interaction with 14-3-3 proteins.</title>
        <authorList>
            <person name="Gao J."/>
            <person name="van Kleeff P.J."/>
            <person name="Oecking C."/>
            <person name="Li K.W."/>
            <person name="Erban A."/>
            <person name="Kopka J."/>
            <person name="Hincha D.K."/>
            <person name="de Boer A.H."/>
        </authorList>
    </citation>
    <scope>INTERACTION WITH CINV1</scope>
</reference>
<reference key="11">
    <citation type="journal article" date="2017" name="Mol. Cell">
        <title>Plasma membrane CRPK1-mediated phosphorylation of 14-3-3 proteins induces their nuclear import to fine-tune CBF signaling during cold response.</title>
        <authorList>
            <person name="Liu Z."/>
            <person name="Jia Y."/>
            <person name="Ding Y."/>
            <person name="Shi Y."/>
            <person name="Li Z."/>
            <person name="Guo Y."/>
            <person name="Gong Z."/>
            <person name="Yang S."/>
        </authorList>
    </citation>
    <scope>FUNCTION</scope>
    <scope>DISRUPTION PHENOTYPE</scope>
    <source>
        <strain>cv. Columbia</strain>
    </source>
</reference>
<reference key="12">
    <citation type="journal article" date="2019" name="Front. Plant Sci.">
        <title>BYPASS1-LIKE, A DUF793 family protein, participates in freezing tolerance via the CBF pathway in Arabidopsis.</title>
        <authorList>
            <person name="Chen T."/>
            <person name="Chen J.-H."/>
            <person name="Zhang W."/>
            <person name="Yang G."/>
            <person name="Yu L.-J."/>
            <person name="Li D.-M."/>
            <person name="Li B."/>
            <person name="Sheng H.-M."/>
            <person name="Zhang H."/>
            <person name="An L.-Z."/>
        </authorList>
    </citation>
    <scope>FUNCTION</scope>
    <scope>DISRUPTION PHENOTYPE</scope>
    <source>
        <strain>cv. Columbia</strain>
    </source>
</reference>
<protein>
    <recommendedName>
        <fullName evidence="6 7">14-3-3-like protein G-BOX factor 14 kappa</fullName>
        <shortName evidence="6 7">14-3-3-like protein GF14 kappa</shortName>
    </recommendedName>
    <alternativeName>
        <fullName evidence="7">General regulatory factor 8</fullName>
    </alternativeName>
</protein>
<gene>
    <name evidence="7" type="primary">GRF8</name>
    <name type="synonym">ATMIN10</name>
    <name evidence="10" type="ordered locus">At5g65430</name>
    <name evidence="11" type="ORF">MNA5.16</name>
</gene>
<accession>P48348</accession>
<accession>Q0WSB7</accession>
<accession>Q9SWP7</accession>
<comment type="function">
    <text evidence="2 4 5">Is associated with a DNA binding complex that binds to the G box, a well-characterized cis-acting DNA regulatory element found in plant genes. Involved in the regulation of nutrient metabolism (PubMed:22104211). Negative regulator of freezing tolerance that modulates cold-responsive C-repeat-binding factors (CBF) DREB1A AND DREB1B proteins stability by facilitating their ubiquitin-mediated degradation; this processus is counteracted by B1L (PubMed:28344081, PubMed:31297122).</text>
</comment>
<comment type="subunit">
    <text evidence="2 3">Interacts with the isocitrate dehydrogenase IDH3, and malate dehydrogenases MDH1 and MDH2 (PubMed:22104211). Interacts with CINV1 (PubMed:25256212).</text>
</comment>
<comment type="subcellular location">
    <subcellularLocation>
        <location evidence="1">Nucleus</location>
    </subcellularLocation>
    <subcellularLocation>
        <location evidence="1">Cytoplasm</location>
    </subcellularLocation>
    <text evidence="1">Translocates from the cytosol to the nucleus when phosphorylated.</text>
</comment>
<comment type="alternative products">
    <event type="alternative splicing"/>
    <isoform>
        <id>P48348-1</id>
        <name>1</name>
        <sequence type="displayed"/>
    </isoform>
    <isoform>
        <id>P48348-2</id>
        <name>2</name>
        <sequence type="described" ref="VSP_008971"/>
    </isoform>
</comment>
<comment type="disruption phenotype">
    <text evidence="2 4 5">Disturbed levels of several metabolites (e.g. beta-alanine, ribose, aspartate, pyroglutamate, glutamate, asparagine, fructose-6-phosphate, myo-inositol, 1,4-diaminobutane, palmitate and shikimate). Enhanced freezing tolerance associated with enhanced cold induction of cold-responsive C-repeat-binding factor (CBF) target genes in the double mutant lacking both GRF6 and GRF8, probably due to the suppression of ubiquitin-mediated degradation DREB1A and DREB1B degradation by the 26S proteasome pathway (PubMed:28344081, PubMed:31297122). Enhanced freezing tolerance in the triple mutant lacking B1L, GRF6 and GRF8 (PubMed:31297122).</text>
</comment>
<comment type="similarity">
    <text evidence="9">Belongs to the 14-3-3 family.</text>
</comment>
<keyword id="KW-0025">Alternative splicing</keyword>
<keyword id="KW-0963">Cytoplasm</keyword>
<keyword id="KW-0539">Nucleus</keyword>
<keyword id="KW-0597">Phosphoprotein</keyword>
<keyword id="KW-1185">Reference proteome</keyword>